<keyword id="KW-0021">Allosteric enzyme</keyword>
<keyword id="KW-0067">ATP-binding</keyword>
<keyword id="KW-0963">Cytoplasm</keyword>
<keyword id="KW-0418">Kinase</keyword>
<keyword id="KW-0547">Nucleotide-binding</keyword>
<keyword id="KW-0665">Pyrimidine biosynthesis</keyword>
<keyword id="KW-0808">Transferase</keyword>
<proteinExistence type="inferred from homology"/>
<organism>
    <name type="scientific">Streptococcus suis (strain 05ZYH33)</name>
    <dbReference type="NCBI Taxonomy" id="391295"/>
    <lineage>
        <taxon>Bacteria</taxon>
        <taxon>Bacillati</taxon>
        <taxon>Bacillota</taxon>
        <taxon>Bacilli</taxon>
        <taxon>Lactobacillales</taxon>
        <taxon>Streptococcaceae</taxon>
        <taxon>Streptococcus</taxon>
    </lineage>
</organism>
<feature type="chain" id="PRO_0000323958" description="Uridylate kinase">
    <location>
        <begin position="1"/>
        <end position="244"/>
    </location>
</feature>
<feature type="region of interest" description="Involved in allosteric activation by GTP" evidence="1">
    <location>
        <begin position="20"/>
        <end position="25"/>
    </location>
</feature>
<feature type="binding site" evidence="1">
    <location>
        <begin position="12"/>
        <end position="15"/>
    </location>
    <ligand>
        <name>ATP</name>
        <dbReference type="ChEBI" id="CHEBI:30616"/>
    </ligand>
</feature>
<feature type="binding site" evidence="1">
    <location>
        <position position="54"/>
    </location>
    <ligand>
        <name>UMP</name>
        <dbReference type="ChEBI" id="CHEBI:57865"/>
    </ligand>
</feature>
<feature type="binding site" evidence="1">
    <location>
        <position position="55"/>
    </location>
    <ligand>
        <name>ATP</name>
        <dbReference type="ChEBI" id="CHEBI:30616"/>
    </ligand>
</feature>
<feature type="binding site" evidence="1">
    <location>
        <position position="59"/>
    </location>
    <ligand>
        <name>ATP</name>
        <dbReference type="ChEBI" id="CHEBI:30616"/>
    </ligand>
</feature>
<feature type="binding site" evidence="1">
    <location>
        <position position="74"/>
    </location>
    <ligand>
        <name>UMP</name>
        <dbReference type="ChEBI" id="CHEBI:57865"/>
    </ligand>
</feature>
<feature type="binding site" evidence="1">
    <location>
        <begin position="135"/>
        <end position="142"/>
    </location>
    <ligand>
        <name>UMP</name>
        <dbReference type="ChEBI" id="CHEBI:57865"/>
    </ligand>
</feature>
<feature type="binding site" evidence="1">
    <location>
        <position position="163"/>
    </location>
    <ligand>
        <name>ATP</name>
        <dbReference type="ChEBI" id="CHEBI:30616"/>
    </ligand>
</feature>
<feature type="binding site" evidence="1">
    <location>
        <position position="169"/>
    </location>
    <ligand>
        <name>ATP</name>
        <dbReference type="ChEBI" id="CHEBI:30616"/>
    </ligand>
</feature>
<feature type="binding site" evidence="1">
    <location>
        <position position="172"/>
    </location>
    <ligand>
        <name>ATP</name>
        <dbReference type="ChEBI" id="CHEBI:30616"/>
    </ligand>
</feature>
<evidence type="ECO:0000255" key="1">
    <source>
        <dbReference type="HAMAP-Rule" id="MF_01220"/>
    </source>
</evidence>
<evidence type="ECO:0000305" key="2"/>
<reference key="1">
    <citation type="journal article" date="2007" name="PLoS ONE">
        <title>A glimpse of streptococcal toxic shock syndrome from comparative genomics of S. suis 2 Chinese isolates.</title>
        <authorList>
            <person name="Chen C."/>
            <person name="Tang J."/>
            <person name="Dong W."/>
            <person name="Wang C."/>
            <person name="Feng Y."/>
            <person name="Wang J."/>
            <person name="Zheng F."/>
            <person name="Pan X."/>
            <person name="Liu D."/>
            <person name="Li M."/>
            <person name="Song Y."/>
            <person name="Zhu X."/>
            <person name="Sun H."/>
            <person name="Feng T."/>
            <person name="Guo Z."/>
            <person name="Ju A."/>
            <person name="Ge J."/>
            <person name="Dong Y."/>
            <person name="Sun W."/>
            <person name="Jiang Y."/>
            <person name="Wang J."/>
            <person name="Yan J."/>
            <person name="Yang H."/>
            <person name="Wang X."/>
            <person name="Gao G.F."/>
            <person name="Yang R."/>
            <person name="Wang J."/>
            <person name="Yu J."/>
        </authorList>
    </citation>
    <scope>NUCLEOTIDE SEQUENCE [LARGE SCALE GENOMIC DNA]</scope>
    <source>
        <strain>05ZYH33</strain>
    </source>
</reference>
<dbReference type="EC" id="2.7.4.22" evidence="1"/>
<dbReference type="EMBL" id="CP000407">
    <property type="protein sequence ID" value="ABP90293.1"/>
    <property type="status" value="ALT_INIT"/>
    <property type="molecule type" value="Genomic_DNA"/>
</dbReference>
<dbReference type="SMR" id="A4VW04"/>
<dbReference type="STRING" id="391295.SSU05_1327"/>
<dbReference type="KEGG" id="ssu:SSU05_1327"/>
<dbReference type="eggNOG" id="COG0528">
    <property type="taxonomic scope" value="Bacteria"/>
</dbReference>
<dbReference type="HOGENOM" id="CLU_033861_0_0_9"/>
<dbReference type="UniPathway" id="UPA00159">
    <property type="reaction ID" value="UER00275"/>
</dbReference>
<dbReference type="GO" id="GO:0005737">
    <property type="term" value="C:cytoplasm"/>
    <property type="evidence" value="ECO:0007669"/>
    <property type="project" value="UniProtKB-SubCell"/>
</dbReference>
<dbReference type="GO" id="GO:0005524">
    <property type="term" value="F:ATP binding"/>
    <property type="evidence" value="ECO:0007669"/>
    <property type="project" value="UniProtKB-KW"/>
</dbReference>
<dbReference type="GO" id="GO:0033862">
    <property type="term" value="F:UMP kinase activity"/>
    <property type="evidence" value="ECO:0007669"/>
    <property type="project" value="UniProtKB-EC"/>
</dbReference>
<dbReference type="GO" id="GO:0044210">
    <property type="term" value="P:'de novo' CTP biosynthetic process"/>
    <property type="evidence" value="ECO:0007669"/>
    <property type="project" value="UniProtKB-UniRule"/>
</dbReference>
<dbReference type="GO" id="GO:0006225">
    <property type="term" value="P:UDP biosynthetic process"/>
    <property type="evidence" value="ECO:0007669"/>
    <property type="project" value="TreeGrafter"/>
</dbReference>
<dbReference type="CDD" id="cd04254">
    <property type="entry name" value="AAK_UMPK-PyrH-Ec"/>
    <property type="match status" value="1"/>
</dbReference>
<dbReference type="FunFam" id="3.40.1160.10:FF:000019">
    <property type="entry name" value="Uridylate kinase"/>
    <property type="match status" value="1"/>
</dbReference>
<dbReference type="Gene3D" id="3.40.1160.10">
    <property type="entry name" value="Acetylglutamate kinase-like"/>
    <property type="match status" value="1"/>
</dbReference>
<dbReference type="HAMAP" id="MF_01220_B">
    <property type="entry name" value="PyrH_B"/>
    <property type="match status" value="1"/>
</dbReference>
<dbReference type="InterPro" id="IPR036393">
    <property type="entry name" value="AceGlu_kinase-like_sf"/>
</dbReference>
<dbReference type="InterPro" id="IPR001048">
    <property type="entry name" value="Asp/Glu/Uridylate_kinase"/>
</dbReference>
<dbReference type="InterPro" id="IPR011817">
    <property type="entry name" value="Uridylate_kinase"/>
</dbReference>
<dbReference type="InterPro" id="IPR015963">
    <property type="entry name" value="Uridylate_kinase_bac"/>
</dbReference>
<dbReference type="NCBIfam" id="TIGR02075">
    <property type="entry name" value="pyrH_bact"/>
    <property type="match status" value="1"/>
</dbReference>
<dbReference type="PANTHER" id="PTHR42833">
    <property type="entry name" value="URIDYLATE KINASE"/>
    <property type="match status" value="1"/>
</dbReference>
<dbReference type="PANTHER" id="PTHR42833:SF4">
    <property type="entry name" value="URIDYLATE KINASE PUMPKIN, CHLOROPLASTIC"/>
    <property type="match status" value="1"/>
</dbReference>
<dbReference type="Pfam" id="PF00696">
    <property type="entry name" value="AA_kinase"/>
    <property type="match status" value="1"/>
</dbReference>
<dbReference type="PIRSF" id="PIRSF005650">
    <property type="entry name" value="Uridylate_kin"/>
    <property type="match status" value="1"/>
</dbReference>
<dbReference type="SUPFAM" id="SSF53633">
    <property type="entry name" value="Carbamate kinase-like"/>
    <property type="match status" value="1"/>
</dbReference>
<accession>A4VW04</accession>
<comment type="function">
    <text evidence="1">Catalyzes the reversible phosphorylation of UMP to UDP.</text>
</comment>
<comment type="catalytic activity">
    <reaction evidence="1">
        <text>UMP + ATP = UDP + ADP</text>
        <dbReference type="Rhea" id="RHEA:24400"/>
        <dbReference type="ChEBI" id="CHEBI:30616"/>
        <dbReference type="ChEBI" id="CHEBI:57865"/>
        <dbReference type="ChEBI" id="CHEBI:58223"/>
        <dbReference type="ChEBI" id="CHEBI:456216"/>
        <dbReference type="EC" id="2.7.4.22"/>
    </reaction>
</comment>
<comment type="activity regulation">
    <text evidence="1">Allosterically activated by GTP. Inhibited by UTP.</text>
</comment>
<comment type="pathway">
    <text evidence="1">Pyrimidine metabolism; CTP biosynthesis via de novo pathway; UDP from UMP (UMPK route): step 1/1.</text>
</comment>
<comment type="subunit">
    <text evidence="1">Homohexamer.</text>
</comment>
<comment type="subcellular location">
    <subcellularLocation>
        <location evidence="1">Cytoplasm</location>
    </subcellularLocation>
</comment>
<comment type="similarity">
    <text evidence="1">Belongs to the UMP kinase family.</text>
</comment>
<comment type="sequence caution" evidence="2">
    <conflict type="erroneous initiation">
        <sequence resource="EMBL-CDS" id="ABP90293"/>
    </conflict>
</comment>
<protein>
    <recommendedName>
        <fullName evidence="1">Uridylate kinase</fullName>
        <shortName evidence="1">UK</shortName>
        <ecNumber evidence="1">2.7.4.22</ecNumber>
    </recommendedName>
    <alternativeName>
        <fullName evidence="1">Uridine monophosphate kinase</fullName>
        <shortName evidence="1">UMP kinase</shortName>
        <shortName evidence="1">UMPK</shortName>
    </alternativeName>
</protein>
<gene>
    <name evidence="1" type="primary">pyrH</name>
    <name type="ordered locus">SSU05_1327</name>
</gene>
<sequence length="244" mass="26214">MMKPKYERILIKLSGEALAGERGVGIDLKTVQEMAKEIQEVAESGIQIALVIGGGNLWRGEPAAEAGMDRVQADYTGMLGTVMNALVMADSLKQLGVDTRVQTAIAMQSVAEPYIRGRALRHLEKGRIVIFGAGIGSPYFSTDTTAALRAAEIEADAILMAKNGVDGVYNADPKKDANAVKFNELTHREVISRGLKIMDATASTLSMDNDIDLVVFNMNEPGNIKRVVFGEPIGTTVSNSSEEK</sequence>
<name>PYRH_STRSY</name>